<dbReference type="EMBL" id="U00096">
    <property type="protein sequence ID" value="ABD18656.2"/>
    <property type="molecule type" value="Genomic_DNA"/>
</dbReference>
<dbReference type="EMBL" id="AP009048">
    <property type="status" value="NOT_ANNOTATED_CDS"/>
    <property type="molecule type" value="Genomic_DNA"/>
</dbReference>
<dbReference type="RefSeq" id="WP_001297116.1">
    <property type="nucleotide sequence ID" value="NZ_STEB01000005.1"/>
</dbReference>
<dbReference type="RefSeq" id="YP_588450.2">
    <property type="nucleotide sequence ID" value="NC_000913.3"/>
</dbReference>
<dbReference type="SMR" id="P58094"/>
<dbReference type="BioGRID" id="853391">
    <property type="interactions" value="3"/>
</dbReference>
<dbReference type="FunCoup" id="P58094">
    <property type="interactions" value="2"/>
</dbReference>
<dbReference type="STRING" id="511145.b4523"/>
<dbReference type="PaxDb" id="511145-b4523"/>
<dbReference type="EnsemblBacteria" id="ABD18656">
    <property type="protein sequence ID" value="ABD18656"/>
    <property type="gene ID" value="b4523"/>
</dbReference>
<dbReference type="GeneID" id="1450257"/>
<dbReference type="GeneID" id="93775397"/>
<dbReference type="KEGG" id="eco:b4523"/>
<dbReference type="KEGG" id="ecoc:C3026_07485"/>
<dbReference type="PATRIC" id="fig|511145.12.peg.1326"/>
<dbReference type="eggNOG" id="ENOG5033N9B">
    <property type="taxonomic scope" value="Bacteria"/>
</dbReference>
<dbReference type="InParanoid" id="P58094"/>
<dbReference type="OMA" id="WQLTTQQ"/>
<dbReference type="OrthoDB" id="6572685at2"/>
<dbReference type="BioCyc" id="EcoCyc:MONOMER0-2886"/>
<dbReference type="PRO" id="PR:P58094"/>
<dbReference type="Proteomes" id="UP000000625">
    <property type="component" value="Chromosome"/>
</dbReference>
<reference key="1">
    <citation type="journal article" date="1997" name="Science">
        <title>The complete genome sequence of Escherichia coli K-12.</title>
        <authorList>
            <person name="Blattner F.R."/>
            <person name="Plunkett G. III"/>
            <person name="Bloch C.A."/>
            <person name="Perna N.T."/>
            <person name="Burland V."/>
            <person name="Riley M."/>
            <person name="Collado-Vides J."/>
            <person name="Glasner J.D."/>
            <person name="Rode C.K."/>
            <person name="Mayhew G.F."/>
            <person name="Gregor J."/>
            <person name="Davis N.W."/>
            <person name="Kirkpatrick H.A."/>
            <person name="Goeden M.A."/>
            <person name="Rose D.J."/>
            <person name="Mau B."/>
            <person name="Shao Y."/>
        </authorList>
    </citation>
    <scope>NUCLEOTIDE SEQUENCE [LARGE SCALE GENOMIC DNA]</scope>
    <source>
        <strain>K12 / MG1655 / ATCC 47076</strain>
    </source>
</reference>
<reference key="2">
    <citation type="journal article" date="2006" name="Mol. Syst. Biol.">
        <title>Highly accurate genome sequences of Escherichia coli K-12 strains MG1655 and W3110.</title>
        <authorList>
            <person name="Hayashi K."/>
            <person name="Morooka N."/>
            <person name="Yamamoto Y."/>
            <person name="Fujita K."/>
            <person name="Isono K."/>
            <person name="Choi S."/>
            <person name="Ohtsubo E."/>
            <person name="Baba T."/>
            <person name="Wanner B.L."/>
            <person name="Mori H."/>
            <person name="Horiuchi T."/>
        </authorList>
    </citation>
    <scope>NUCLEOTIDE SEQUENCE [LARGE SCALE GENOMIC DNA]</scope>
    <source>
        <strain>K12 / W3110 / ATCC 27325 / DSM 5911</strain>
    </source>
</reference>
<feature type="chain" id="PRO_0000168890" description="Uncharacterized protein YciX">
    <location>
        <begin position="1"/>
        <end position="55"/>
    </location>
</feature>
<feature type="region of interest" description="Disordered" evidence="1">
    <location>
        <begin position="1"/>
        <end position="26"/>
    </location>
</feature>
<feature type="compositionally biased region" description="Polar residues" evidence="1">
    <location>
        <begin position="1"/>
        <end position="15"/>
    </location>
</feature>
<feature type="compositionally biased region" description="Basic and acidic residues" evidence="1">
    <location>
        <begin position="16"/>
        <end position="26"/>
    </location>
</feature>
<protein>
    <recommendedName>
        <fullName>Uncharacterized protein YciX</fullName>
    </recommendedName>
</protein>
<gene>
    <name type="primary">yciX</name>
    <name type="ordered locus">b4523</name>
    <name type="ordered locus">JW5198/JW5199</name>
</gene>
<evidence type="ECO:0000256" key="1">
    <source>
        <dbReference type="SAM" id="MobiDB-lite"/>
    </source>
</evidence>
<keyword id="KW-1185">Reference proteome</keyword>
<name>YCIX_ECOLI</name>
<sequence>MVGQEQLESSPLCQHSDNETETKRECSVVIPDDWQLTSQQQAFIELFAEDDQPKQ</sequence>
<proteinExistence type="predicted"/>
<organism>
    <name type="scientific">Escherichia coli (strain K12)</name>
    <dbReference type="NCBI Taxonomy" id="83333"/>
    <lineage>
        <taxon>Bacteria</taxon>
        <taxon>Pseudomonadati</taxon>
        <taxon>Pseudomonadota</taxon>
        <taxon>Gammaproteobacteria</taxon>
        <taxon>Enterobacterales</taxon>
        <taxon>Enterobacteriaceae</taxon>
        <taxon>Escherichia</taxon>
    </lineage>
</organism>
<accession>P58094</accession>